<sequence>MAEVGKVLASDMELDHSNETKAVDDVVATTDKAEVIPVAVTRTETVVESLESTDCKELEKLVPHTVASQSEVDVASPVSEKAPKVSESSGALSLQSGSEGNSPFIREKVMEDGYNWRKYGQKLVKGNEFVRSYYRCTHPNCKAKKQLERSAGGQVVDTVYFGEHDHPKPLAGAVPINQDKRSDVFTAVSKGEQRIDIVSLIYKLCIVSYDIMFVEKTSGSSVQTLRQTEPPKIHGGLHVSVIPPADDVKTDISQSSRITGDNTHKDYNSPTAKRRKKGGNIELSPVERSTNDSRIVVHTQTLFDIVNDGYRWRKYGQKSVKGSPYPRSYYRCSSPGCPVKKHVERSSHDTKLLITTYEGKHDHDMPPGRVVTHNNMLDSEVDDKEGDANKTPQSSTLQSITKDQHVEDHLRKKTKTNGFEKSLDQGPVLDEKLKEEIKERSDANKDHAANHAKPEAKSDDKTTVCQEKAVGTLESEEQKPKTEPAQS</sequence>
<gene>
    <name evidence="6" type="primary">WRKY1</name>
    <name evidence="5" type="synonym">ZAP1</name>
    <name evidence="10" type="ordered locus">At2g04880</name>
    <name evidence="11" type="ORF">F1O13.1</name>
    <name evidence="12" type="ORF">F28I8.34</name>
</gene>
<dbReference type="EMBL" id="X92976">
    <property type="protein sequence ID" value="CAA63554.1"/>
    <property type="molecule type" value="mRNA"/>
</dbReference>
<dbReference type="EMBL" id="AF442389">
    <property type="protein sequence ID" value="AAL35282.1"/>
    <property type="molecule type" value="mRNA"/>
</dbReference>
<dbReference type="EMBL" id="AF442390">
    <property type="protein sequence ID" value="AAL35283.1"/>
    <property type="molecule type" value="mRNA"/>
</dbReference>
<dbReference type="EMBL" id="AC006955">
    <property type="protein sequence ID" value="AAM15341.1"/>
    <property type="molecule type" value="Genomic_DNA"/>
</dbReference>
<dbReference type="EMBL" id="AC007211">
    <property type="protein sequence ID" value="AAD25579.1"/>
    <property type="molecule type" value="Genomic_DNA"/>
</dbReference>
<dbReference type="EMBL" id="CP002685">
    <property type="protein sequence ID" value="AEC05880.1"/>
    <property type="molecule type" value="Genomic_DNA"/>
</dbReference>
<dbReference type="EMBL" id="CP002685">
    <property type="protein sequence ID" value="AEC05881.1"/>
    <property type="molecule type" value="Genomic_DNA"/>
</dbReference>
<dbReference type="EMBL" id="BT029167">
    <property type="protein sequence ID" value="ABJ17102.1"/>
    <property type="molecule type" value="mRNA"/>
</dbReference>
<dbReference type="PIR" id="F84462">
    <property type="entry name" value="F84462"/>
</dbReference>
<dbReference type="RefSeq" id="NP_178565.1">
    <molecule id="Q9SI37-1"/>
    <property type="nucleotide sequence ID" value="NM_126520.4"/>
</dbReference>
<dbReference type="RefSeq" id="NP_849936.1">
    <molecule id="Q9SI37-2"/>
    <property type="nucleotide sequence ID" value="NM_179605.3"/>
</dbReference>
<dbReference type="PDB" id="2AYD">
    <property type="method" value="X-ray"/>
    <property type="resolution" value="1.60 A"/>
    <property type="chains" value="A=293-368"/>
</dbReference>
<dbReference type="PDB" id="6J4E">
    <property type="method" value="X-ray"/>
    <property type="resolution" value="3.13 A"/>
    <property type="chains" value="B=101-170"/>
</dbReference>
<dbReference type="PDB" id="7D11">
    <property type="method" value="NMR"/>
    <property type="chains" value="A=92-170"/>
</dbReference>
<dbReference type="PDBsum" id="2AYD"/>
<dbReference type="PDBsum" id="6J4E"/>
<dbReference type="PDBsum" id="7D11"/>
<dbReference type="SMR" id="Q9SI37"/>
<dbReference type="BioGRID" id="436">
    <property type="interactions" value="1"/>
</dbReference>
<dbReference type="FunCoup" id="Q9SI37">
    <property type="interactions" value="1082"/>
</dbReference>
<dbReference type="IntAct" id="Q9SI37">
    <property type="interactions" value="1"/>
</dbReference>
<dbReference type="STRING" id="3702.Q9SI37"/>
<dbReference type="GlyGen" id="Q9SI37">
    <property type="glycosylation" value="2 sites, 1 O-linked glycan (2 sites)"/>
</dbReference>
<dbReference type="iPTMnet" id="Q9SI37"/>
<dbReference type="PaxDb" id="3702-AT2G04880.1"/>
<dbReference type="ProteomicsDB" id="234394">
    <molecule id="Q9SI37-1"/>
</dbReference>
<dbReference type="EnsemblPlants" id="AT2G04880.1">
    <molecule id="Q9SI37-1"/>
    <property type="protein sequence ID" value="AT2G04880.1"/>
    <property type="gene ID" value="AT2G04880"/>
</dbReference>
<dbReference type="EnsemblPlants" id="AT2G04880.2">
    <molecule id="Q9SI37-2"/>
    <property type="protein sequence ID" value="AT2G04880.2"/>
    <property type="gene ID" value="AT2G04880"/>
</dbReference>
<dbReference type="GeneID" id="815035"/>
<dbReference type="Gramene" id="AT2G04880.1">
    <molecule id="Q9SI37-1"/>
    <property type="protein sequence ID" value="AT2G04880.1"/>
    <property type="gene ID" value="AT2G04880"/>
</dbReference>
<dbReference type="Gramene" id="AT2G04880.2">
    <molecule id="Q9SI37-2"/>
    <property type="protein sequence ID" value="AT2G04880.2"/>
    <property type="gene ID" value="AT2G04880"/>
</dbReference>
<dbReference type="KEGG" id="ath:AT2G04880"/>
<dbReference type="Araport" id="AT2G04880"/>
<dbReference type="TAIR" id="AT2G04880">
    <property type="gene designation" value="ZAP1"/>
</dbReference>
<dbReference type="eggNOG" id="ENOG502QV11">
    <property type="taxonomic scope" value="Eukaryota"/>
</dbReference>
<dbReference type="InParanoid" id="Q9SI37"/>
<dbReference type="OMA" id="EHHSKKK"/>
<dbReference type="OrthoDB" id="1918969at2759"/>
<dbReference type="PhylomeDB" id="Q9SI37"/>
<dbReference type="EvolutionaryTrace" id="Q9SI37"/>
<dbReference type="PRO" id="PR:Q9SI37"/>
<dbReference type="Proteomes" id="UP000006548">
    <property type="component" value="Chromosome 2"/>
</dbReference>
<dbReference type="ExpressionAtlas" id="Q9SI37">
    <property type="expression patterns" value="baseline and differential"/>
</dbReference>
<dbReference type="GO" id="GO:0005739">
    <property type="term" value="C:mitochondrion"/>
    <property type="evidence" value="ECO:0007005"/>
    <property type="project" value="TAIR"/>
</dbReference>
<dbReference type="GO" id="GO:0005634">
    <property type="term" value="C:nucleus"/>
    <property type="evidence" value="ECO:0000314"/>
    <property type="project" value="UniProtKB"/>
</dbReference>
<dbReference type="GO" id="GO:0003677">
    <property type="term" value="F:DNA binding"/>
    <property type="evidence" value="ECO:0000315"/>
    <property type="project" value="UniProtKB"/>
</dbReference>
<dbReference type="GO" id="GO:0003700">
    <property type="term" value="F:DNA-binding transcription factor activity"/>
    <property type="evidence" value="ECO:0000314"/>
    <property type="project" value="TAIR"/>
</dbReference>
<dbReference type="GO" id="GO:0000976">
    <property type="term" value="F:transcription cis-regulatory region binding"/>
    <property type="evidence" value="ECO:0000353"/>
    <property type="project" value="TAIR"/>
</dbReference>
<dbReference type="GO" id="GO:0008270">
    <property type="term" value="F:zinc ion binding"/>
    <property type="evidence" value="ECO:0000314"/>
    <property type="project" value="TAIR"/>
</dbReference>
<dbReference type="GO" id="GO:0045893">
    <property type="term" value="P:positive regulation of DNA-templated transcription"/>
    <property type="evidence" value="ECO:0000314"/>
    <property type="project" value="TAIR"/>
</dbReference>
<dbReference type="GO" id="GO:0009751">
    <property type="term" value="P:response to salicylic acid"/>
    <property type="evidence" value="ECO:0000270"/>
    <property type="project" value="UniProtKB"/>
</dbReference>
<dbReference type="GO" id="GO:0009863">
    <property type="term" value="P:salicylic acid mediated signaling pathway"/>
    <property type="evidence" value="ECO:0000270"/>
    <property type="project" value="TAIR"/>
</dbReference>
<dbReference type="FunFam" id="2.20.25.80:FF:000006">
    <property type="entry name" value="WRKY transcription factor"/>
    <property type="match status" value="1"/>
</dbReference>
<dbReference type="FunFam" id="2.20.25.80:FF:000003">
    <property type="entry name" value="WRKY transcription factor 57"/>
    <property type="match status" value="1"/>
</dbReference>
<dbReference type="Gene3D" id="2.20.25.80">
    <property type="entry name" value="WRKY domain"/>
    <property type="match status" value="2"/>
</dbReference>
<dbReference type="InterPro" id="IPR003657">
    <property type="entry name" value="WRKY_dom"/>
</dbReference>
<dbReference type="InterPro" id="IPR036576">
    <property type="entry name" value="WRKY_dom_sf"/>
</dbReference>
<dbReference type="InterPro" id="IPR044810">
    <property type="entry name" value="WRKY_plant"/>
</dbReference>
<dbReference type="PANTHER" id="PTHR31221:SF125">
    <property type="entry name" value="WRKY TRANSCRIPTION FACTOR 1"/>
    <property type="match status" value="1"/>
</dbReference>
<dbReference type="PANTHER" id="PTHR31221">
    <property type="entry name" value="WRKY TRANSCRIPTION FACTOR PROTEIN 1-RELATED"/>
    <property type="match status" value="1"/>
</dbReference>
<dbReference type="Pfam" id="PF03106">
    <property type="entry name" value="WRKY"/>
    <property type="match status" value="2"/>
</dbReference>
<dbReference type="SMART" id="SM00774">
    <property type="entry name" value="WRKY"/>
    <property type="match status" value="2"/>
</dbReference>
<dbReference type="SUPFAM" id="SSF118290">
    <property type="entry name" value="WRKY DNA-binding domain"/>
    <property type="match status" value="2"/>
</dbReference>
<dbReference type="PROSITE" id="PS50811">
    <property type="entry name" value="WRKY"/>
    <property type="match status" value="2"/>
</dbReference>
<keyword id="KW-0002">3D-structure</keyword>
<keyword id="KW-0010">Activator</keyword>
<keyword id="KW-0025">Alternative splicing</keyword>
<keyword id="KW-0238">DNA-binding</keyword>
<keyword id="KW-0479">Metal-binding</keyword>
<keyword id="KW-0539">Nucleus</keyword>
<keyword id="KW-0597">Phosphoprotein</keyword>
<keyword id="KW-1185">Reference proteome</keyword>
<keyword id="KW-0677">Repeat</keyword>
<keyword id="KW-0804">Transcription</keyword>
<keyword id="KW-0805">Transcription regulation</keyword>
<keyword id="KW-0862">Zinc</keyword>
<reference key="1">
    <citation type="journal article" date="1996" name="Nucleic Acids Res.">
        <title>Characterization of a zinc-dependent transcriptional activator from Arabidopsis.</title>
        <authorList>
            <person name="De Pater S."/>
            <person name="Greco V."/>
            <person name="Pham K."/>
            <person name="Memelink J."/>
            <person name="Kijne J."/>
        </authorList>
    </citation>
    <scope>NUCLEOTIDE SEQUENCE [MRNA] (ISOFORM 2)</scope>
    <scope>FUNCTION</scope>
    <scope>TISSUE SPECIFICITY</scope>
    <scope>DNA-BINDING</scope>
    <source>
        <strain>cv. C24</strain>
        <tissue>Flower</tissue>
        <tissue>Silique</tissue>
    </source>
</reference>
<reference key="2">
    <citation type="submission" date="2001-10" db="EMBL/GenBank/DDBJ databases">
        <title>Arabidopsis thaliana transcription factor WRKY1.</title>
        <authorList>
            <person name="Ulker B."/>
            <person name="Kushnir S."/>
            <person name="Somssich I.E."/>
        </authorList>
    </citation>
    <scope>NUCLEOTIDE SEQUENCE [MRNA] (ISOFORM 1)</scope>
    <source>
        <strain>cv. Columbia</strain>
        <tissue>Flower</tissue>
    </source>
</reference>
<reference key="3">
    <citation type="journal article" date="1999" name="Nature">
        <title>Sequence and analysis of chromosome 2 of the plant Arabidopsis thaliana.</title>
        <authorList>
            <person name="Lin X."/>
            <person name="Kaul S."/>
            <person name="Rounsley S.D."/>
            <person name="Shea T.P."/>
            <person name="Benito M.-I."/>
            <person name="Town C.D."/>
            <person name="Fujii C.Y."/>
            <person name="Mason T.M."/>
            <person name="Bowman C.L."/>
            <person name="Barnstead M.E."/>
            <person name="Feldblyum T.V."/>
            <person name="Buell C.R."/>
            <person name="Ketchum K.A."/>
            <person name="Lee J.J."/>
            <person name="Ronning C.M."/>
            <person name="Koo H.L."/>
            <person name="Moffat K.S."/>
            <person name="Cronin L.A."/>
            <person name="Shen M."/>
            <person name="Pai G."/>
            <person name="Van Aken S."/>
            <person name="Umayam L."/>
            <person name="Tallon L.J."/>
            <person name="Gill J.E."/>
            <person name="Adams M.D."/>
            <person name="Carrera A.J."/>
            <person name="Creasy T.H."/>
            <person name="Goodman H.M."/>
            <person name="Somerville C.R."/>
            <person name="Copenhaver G.P."/>
            <person name="Preuss D."/>
            <person name="Nierman W.C."/>
            <person name="White O."/>
            <person name="Eisen J.A."/>
            <person name="Salzberg S.L."/>
            <person name="Fraser C.M."/>
            <person name="Venter J.C."/>
        </authorList>
    </citation>
    <scope>NUCLEOTIDE SEQUENCE [LARGE SCALE GENOMIC DNA]</scope>
    <source>
        <strain>cv. Columbia</strain>
    </source>
</reference>
<reference key="4">
    <citation type="journal article" date="2017" name="Plant J.">
        <title>Araport11: a complete reannotation of the Arabidopsis thaliana reference genome.</title>
        <authorList>
            <person name="Cheng C.Y."/>
            <person name="Krishnakumar V."/>
            <person name="Chan A.P."/>
            <person name="Thibaud-Nissen F."/>
            <person name="Schobel S."/>
            <person name="Town C.D."/>
        </authorList>
    </citation>
    <scope>GENOME REANNOTATION</scope>
    <source>
        <strain>cv. Columbia</strain>
    </source>
</reference>
<reference key="5">
    <citation type="submission" date="2006-10" db="EMBL/GenBank/DDBJ databases">
        <title>Arabidopsis ORF clone.</title>
        <authorList>
            <person name="Bautista V.R."/>
            <person name="Kim C.J."/>
            <person name="Chen H."/>
            <person name="Quinitio C."/>
            <person name="Ecker J.R."/>
        </authorList>
    </citation>
    <scope>NUCLEOTIDE SEQUENCE [LARGE SCALE MRNA] (ISOFORM 2)</scope>
    <source>
        <strain>cv. Columbia</strain>
    </source>
</reference>
<reference key="6">
    <citation type="journal article" date="2009" name="Plant Physiol.">
        <title>Large-scale Arabidopsis phosphoproteome profiling reveals novel chloroplast kinase substrates and phosphorylation networks.</title>
        <authorList>
            <person name="Reiland S."/>
            <person name="Messerli G."/>
            <person name="Baerenfaller K."/>
            <person name="Gerrits B."/>
            <person name="Endler A."/>
            <person name="Grossmann J."/>
            <person name="Gruissem W."/>
            <person name="Baginsky S."/>
        </authorList>
    </citation>
    <scope>PHOSPHORYLATION [LARGE SCALE ANALYSIS] AT SER-76</scope>
    <scope>IDENTIFICATION BY MASS SPECTROMETRY [LARGE SCALE ANALYSIS]</scope>
</reference>
<reference key="7">
    <citation type="journal article" date="2007" name="Nucleic Acids Res.">
        <title>DNA binding mechanism revealed by high resolution crystal structure of Arabidopsis thaliana WRKY1 protein.</title>
        <authorList>
            <person name="Duan M.-R."/>
            <person name="Nan J."/>
            <person name="Liang Y.-H."/>
            <person name="Mao P."/>
            <person name="Lu L."/>
            <person name="Li L."/>
            <person name="Wei C."/>
            <person name="Lai L."/>
            <person name="Li Y."/>
            <person name="Su X.-D."/>
        </authorList>
    </citation>
    <scope>X-RAY CRYSTALLOGRAPHY (1.60 ANGSTROMS) OF 293-368 IN COMPLEX WITH ZINC</scope>
    <scope>INDUCTION BY SALICYLIC ACID</scope>
    <scope>SUBCELLULAR LOCATION</scope>
    <scope>MUTAGENESIS OF 273-LYS--LYS-277; ARG-313; LYS-314; TYR-315; GLY-316; GLN-317; ARG-327; TYR-330; ARG-331 AND LYS-340</scope>
    <scope>NUCLEAR LOCALIZATION SIGNAL</scope>
    <source>
        <strain>cv. Columbia</strain>
    </source>
</reference>
<feature type="chain" id="PRO_0000133644" description="WRKY transcription factor 1">
    <location>
        <begin position="1"/>
        <end position="487"/>
    </location>
</feature>
<feature type="DNA-binding region" description="WRKY 1" evidence="1">
    <location>
        <begin position="105"/>
        <end position="169"/>
    </location>
</feature>
<feature type="DNA-binding region" description="WRKY 2" evidence="1">
    <location>
        <begin position="301"/>
        <end position="366"/>
    </location>
</feature>
<feature type="region of interest" description="Disordered" evidence="2">
    <location>
        <begin position="69"/>
        <end position="104"/>
    </location>
</feature>
<feature type="region of interest" description="Disordered" evidence="2">
    <location>
        <begin position="255"/>
        <end position="287"/>
    </location>
</feature>
<feature type="region of interest" description="Disordered" evidence="2">
    <location>
        <begin position="380"/>
        <end position="487"/>
    </location>
</feature>
<feature type="short sequence motif" description="Nuclear localization signal" evidence="3">
    <location>
        <begin position="273"/>
        <end position="277"/>
    </location>
</feature>
<feature type="compositionally biased region" description="Polar residues" evidence="2">
    <location>
        <begin position="86"/>
        <end position="101"/>
    </location>
</feature>
<feature type="compositionally biased region" description="Polar residues" evidence="2">
    <location>
        <begin position="390"/>
        <end position="401"/>
    </location>
</feature>
<feature type="compositionally biased region" description="Basic and acidic residues" evidence="2">
    <location>
        <begin position="429"/>
        <end position="462"/>
    </location>
</feature>
<feature type="compositionally biased region" description="Basic and acidic residues" evidence="2">
    <location>
        <begin position="476"/>
        <end position="487"/>
    </location>
</feature>
<feature type="binding site" evidence="9 13">
    <location>
        <position position="136"/>
    </location>
    <ligand>
        <name>Zn(2+)</name>
        <dbReference type="ChEBI" id="CHEBI:29105"/>
    </ligand>
</feature>
<feature type="binding site" evidence="9 13">
    <location>
        <position position="141"/>
    </location>
    <ligand>
        <name>Zn(2+)</name>
        <dbReference type="ChEBI" id="CHEBI:29105"/>
    </ligand>
</feature>
<feature type="binding site" evidence="9 13">
    <location>
        <position position="164"/>
    </location>
    <ligand>
        <name>Zn(2+)</name>
        <dbReference type="ChEBI" id="CHEBI:29105"/>
    </ligand>
</feature>
<feature type="binding site" evidence="9 13">
    <location>
        <position position="166"/>
    </location>
    <ligand>
        <name>Zn(2+)</name>
        <dbReference type="ChEBI" id="CHEBI:29105"/>
    </ligand>
</feature>
<feature type="binding site" evidence="3 13">
    <location>
        <position position="332"/>
    </location>
    <ligand>
        <name>Zn(2+)</name>
        <dbReference type="ChEBI" id="CHEBI:29105"/>
    </ligand>
</feature>
<feature type="binding site" evidence="3 13">
    <location>
        <position position="337"/>
    </location>
    <ligand>
        <name>Zn(2+)</name>
        <dbReference type="ChEBI" id="CHEBI:29105"/>
    </ligand>
</feature>
<feature type="binding site" evidence="3 13">
    <location>
        <position position="361"/>
    </location>
    <ligand>
        <name>Zn(2+)</name>
        <dbReference type="ChEBI" id="CHEBI:29105"/>
    </ligand>
</feature>
<feature type="binding site" evidence="3 13">
    <location>
        <position position="363"/>
    </location>
    <ligand>
        <name>Zn(2+)</name>
        <dbReference type="ChEBI" id="CHEBI:29105"/>
    </ligand>
</feature>
<feature type="modified residue" description="Phosphoserine" evidence="14">
    <location>
        <position position="76"/>
    </location>
</feature>
<feature type="splice variant" id="VSP_007124" description="In isoform 2." evidence="5 7">
    <location>
        <begin position="191"/>
        <end position="214"/>
    </location>
</feature>
<feature type="mutagenesis site" description="Impaired nuclear localization." evidence="3">
    <location>
        <begin position="273"/>
        <end position="277"/>
    </location>
</feature>
<feature type="mutagenesis site" description="Reduced DNA-binding activity." evidence="3">
    <original>R</original>
    <variation>E</variation>
    <location>
        <position position="313"/>
    </location>
</feature>
<feature type="mutagenesis site" description="Impaired DNA-binding activity." evidence="3">
    <original>K</original>
    <variation>A</variation>
    <location>
        <position position="314"/>
    </location>
</feature>
<feature type="mutagenesis site" description="Reduced DNA-binding activity." evidence="3">
    <original>K</original>
    <variation>R</variation>
    <location>
        <position position="314"/>
    </location>
</feature>
<feature type="mutagenesis site" description="Reduced DNA-binding activity." evidence="3">
    <original>Y</original>
    <variation>F</variation>
    <location>
        <position position="315"/>
    </location>
</feature>
<feature type="mutagenesis site" description="Impaired DNA-binding activity." evidence="3">
    <original>Y</original>
    <variation>R</variation>
    <location>
        <position position="315"/>
    </location>
</feature>
<feature type="mutagenesis site" description="Impaired DNA-binding activity." evidence="3">
    <original>G</original>
    <variation>F</variation>
    <location>
        <position position="316"/>
    </location>
</feature>
<feature type="mutagenesis site" description="Normal DNA-binding activity." evidence="3">
    <original>Q</original>
    <variation>A</variation>
    <location>
        <position position="317"/>
    </location>
</feature>
<feature type="mutagenesis site" description="Reduced DNA-binding activity." evidence="3">
    <original>Q</original>
    <variation>K</variation>
    <location>
        <position position="317"/>
    </location>
</feature>
<feature type="mutagenesis site" description="Impaired DNA-binding activity." evidence="3">
    <original>R</original>
    <variation>A</variation>
    <variation>E</variation>
    <location>
        <position position="327"/>
    </location>
</feature>
<feature type="mutagenesis site" description="Normal DNA-binding activity." evidence="3">
    <original>Y</original>
    <variation>F</variation>
    <location>
        <position position="330"/>
    </location>
</feature>
<feature type="mutagenesis site" description="Impaired DNA-binding activity." evidence="3">
    <original>R</original>
    <variation>A</variation>
    <location>
        <position position="331"/>
    </location>
</feature>
<feature type="mutagenesis site" description="Normal DNA-binding activity." evidence="3">
    <original>R</original>
    <variation>K</variation>
    <location>
        <position position="331"/>
    </location>
</feature>
<feature type="mutagenesis site" description="Normal DNA-binding activity." evidence="3">
    <original>K</original>
    <variation>A</variation>
    <location>
        <position position="340"/>
    </location>
</feature>
<feature type="turn" evidence="17">
    <location>
        <begin position="93"/>
        <end position="95"/>
    </location>
</feature>
<feature type="strand" evidence="17">
    <location>
        <begin position="103"/>
        <end position="105"/>
    </location>
</feature>
<feature type="strand" evidence="17">
    <location>
        <begin position="110"/>
        <end position="112"/>
    </location>
</feature>
<feature type="strand" evidence="16">
    <location>
        <begin position="116"/>
        <end position="124"/>
    </location>
</feature>
<feature type="turn" evidence="16">
    <location>
        <begin position="125"/>
        <end position="128"/>
    </location>
</feature>
<feature type="strand" evidence="16">
    <location>
        <begin position="129"/>
        <end position="136"/>
    </location>
</feature>
<feature type="strand" evidence="16">
    <location>
        <begin position="144"/>
        <end position="149"/>
    </location>
</feature>
<feature type="strand" evidence="16">
    <location>
        <begin position="155"/>
        <end position="162"/>
    </location>
</feature>
<feature type="strand" evidence="15">
    <location>
        <begin position="294"/>
        <end position="300"/>
    </location>
</feature>
<feature type="strand" evidence="15">
    <location>
        <begin position="302"/>
        <end position="304"/>
    </location>
</feature>
<feature type="strand" evidence="15">
    <location>
        <begin position="312"/>
        <end position="318"/>
    </location>
</feature>
<feature type="strand" evidence="15">
    <location>
        <begin position="327"/>
        <end position="332"/>
    </location>
</feature>
<feature type="strand" evidence="15">
    <location>
        <begin position="340"/>
        <end position="345"/>
    </location>
</feature>
<feature type="strand" evidence="15">
    <location>
        <begin position="347"/>
        <end position="349"/>
    </location>
</feature>
<feature type="strand" evidence="15">
    <location>
        <begin position="352"/>
        <end position="359"/>
    </location>
</feature>
<proteinExistence type="evidence at protein level"/>
<protein>
    <recommendedName>
        <fullName evidence="6">WRKY transcription factor 1</fullName>
    </recommendedName>
    <alternativeName>
        <fullName evidence="5">Transcription factor ZAP1</fullName>
    </alternativeName>
    <alternativeName>
        <fullName evidence="6">WRKY DNA-binding protein 1</fullName>
    </alternativeName>
    <alternativeName>
        <fullName evidence="5">Zinc-dependent activator protein 1</fullName>
    </alternativeName>
</protein>
<accession>Q9SI37</accession>
<accession>Q058Q1</accession>
<accession>Q43388</accession>
<name>WRKY1_ARATH</name>
<evidence type="ECO:0000255" key="1">
    <source>
        <dbReference type="PROSITE-ProRule" id="PRU00223"/>
    </source>
</evidence>
<evidence type="ECO:0000256" key="2">
    <source>
        <dbReference type="SAM" id="MobiDB-lite"/>
    </source>
</evidence>
<evidence type="ECO:0000269" key="3">
    <source>
    </source>
</evidence>
<evidence type="ECO:0000269" key="4">
    <source>
    </source>
</evidence>
<evidence type="ECO:0000303" key="5">
    <source>
    </source>
</evidence>
<evidence type="ECO:0000303" key="6">
    <source ref="2"/>
</evidence>
<evidence type="ECO:0000303" key="7">
    <source ref="5"/>
</evidence>
<evidence type="ECO:0000305" key="8"/>
<evidence type="ECO:0000305" key="9">
    <source>
    </source>
</evidence>
<evidence type="ECO:0000312" key="10">
    <source>
        <dbReference type="Araport" id="AT2G04880"/>
    </source>
</evidence>
<evidence type="ECO:0000312" key="11">
    <source>
        <dbReference type="EMBL" id="AAD25579.1"/>
    </source>
</evidence>
<evidence type="ECO:0000312" key="12">
    <source>
        <dbReference type="EMBL" id="AAL35283.1"/>
    </source>
</evidence>
<evidence type="ECO:0007744" key="13">
    <source>
        <dbReference type="PDB" id="2AYD"/>
    </source>
</evidence>
<evidence type="ECO:0007744" key="14">
    <source>
    </source>
</evidence>
<evidence type="ECO:0007829" key="15">
    <source>
        <dbReference type="PDB" id="2AYD"/>
    </source>
</evidence>
<evidence type="ECO:0007829" key="16">
    <source>
        <dbReference type="PDB" id="6J4E"/>
    </source>
</evidence>
<evidence type="ECO:0007829" key="17">
    <source>
        <dbReference type="PDB" id="7D11"/>
    </source>
</evidence>
<organism>
    <name type="scientific">Arabidopsis thaliana</name>
    <name type="common">Mouse-ear cress</name>
    <dbReference type="NCBI Taxonomy" id="3702"/>
    <lineage>
        <taxon>Eukaryota</taxon>
        <taxon>Viridiplantae</taxon>
        <taxon>Streptophyta</taxon>
        <taxon>Embryophyta</taxon>
        <taxon>Tracheophyta</taxon>
        <taxon>Spermatophyta</taxon>
        <taxon>Magnoliopsida</taxon>
        <taxon>eudicotyledons</taxon>
        <taxon>Gunneridae</taxon>
        <taxon>Pentapetalae</taxon>
        <taxon>rosids</taxon>
        <taxon>malvids</taxon>
        <taxon>Brassicales</taxon>
        <taxon>Brassicaceae</taxon>
        <taxon>Camelineae</taxon>
        <taxon>Arabidopsis</taxon>
    </lineage>
</organism>
<comment type="function">
    <text evidence="4">Transcription factor. Binds to a 5'-CGTTGACCGAG-3' consensus core sequence which contains a W box, a frequently occurring elicitor-responsive cis-acting element.</text>
</comment>
<comment type="subcellular location">
    <subcellularLocation>
        <location evidence="3">Nucleus</location>
    </subcellularLocation>
</comment>
<comment type="alternative products">
    <event type="alternative splicing"/>
    <isoform>
        <id>Q9SI37-1</id>
        <name>1</name>
        <sequence type="displayed"/>
    </isoform>
    <isoform>
        <id>Q9SI37-2</id>
        <name>2</name>
        <sequence type="described" ref="VSP_007124"/>
    </isoform>
</comment>
<comment type="tissue specificity">
    <text evidence="4">Expressed to similar levels in root and flower, to a somewhat lower level in stem and to low levels in leaf and siliques.</text>
</comment>
<comment type="induction">
    <text evidence="3">By salicylic acid (SA).</text>
</comment>
<comment type="miscellaneous">
    <text evidence="4">Binding to target DNA is mediated mainly by the C-terminal WRKY domain, while part of the activation domain is located between positions 210 and 285.</text>
</comment>
<comment type="similarity">
    <text evidence="8">Belongs to the WRKY group I family.</text>
</comment>